<sequence length="251" mass="28198">MVDQEKETTHFGFRTVAKEQKEGMVAEVFHSVAAKYDLMNDLMSFGVHRIWKRFTVDCSGVRRGQRVLDLAGGTGDLTAKFSRLVGEQGEVILADINESMLRMGREKLRDKGIVGNVSYVQANAEALPFPDNYFDCITISFGLRNVTEKEKALRSMFRVLKPGGRLLVLEFSKPLLEPLSKAYDAYSFHILPKIGELVAQDAESYRYLAESIRMHPDQETLKGMMADAGFENVTYSNLTGGIVALHRGFKF</sequence>
<accession>A7FDE0</accession>
<comment type="function">
    <text evidence="1">Methyltransferase required for the conversion of demethylmenaquinol (DMKH2) to menaquinol (MKH2) and the conversion of 2-polyprenyl-6-methoxy-1,4-benzoquinol (DDMQH2) to 2-polyprenyl-3-methyl-6-methoxy-1,4-benzoquinol (DMQH2).</text>
</comment>
<comment type="catalytic activity">
    <reaction evidence="1">
        <text>a 2-demethylmenaquinol + S-adenosyl-L-methionine = a menaquinol + S-adenosyl-L-homocysteine + H(+)</text>
        <dbReference type="Rhea" id="RHEA:42640"/>
        <dbReference type="Rhea" id="RHEA-COMP:9539"/>
        <dbReference type="Rhea" id="RHEA-COMP:9563"/>
        <dbReference type="ChEBI" id="CHEBI:15378"/>
        <dbReference type="ChEBI" id="CHEBI:18151"/>
        <dbReference type="ChEBI" id="CHEBI:55437"/>
        <dbReference type="ChEBI" id="CHEBI:57856"/>
        <dbReference type="ChEBI" id="CHEBI:59789"/>
        <dbReference type="EC" id="2.1.1.163"/>
    </reaction>
</comment>
<comment type="catalytic activity">
    <reaction evidence="1">
        <text>a 2-methoxy-6-(all-trans-polyprenyl)benzene-1,4-diol + S-adenosyl-L-methionine = a 5-methoxy-2-methyl-3-(all-trans-polyprenyl)benzene-1,4-diol + S-adenosyl-L-homocysteine + H(+)</text>
        <dbReference type="Rhea" id="RHEA:28286"/>
        <dbReference type="Rhea" id="RHEA-COMP:10858"/>
        <dbReference type="Rhea" id="RHEA-COMP:10859"/>
        <dbReference type="ChEBI" id="CHEBI:15378"/>
        <dbReference type="ChEBI" id="CHEBI:57856"/>
        <dbReference type="ChEBI" id="CHEBI:59789"/>
        <dbReference type="ChEBI" id="CHEBI:84166"/>
        <dbReference type="ChEBI" id="CHEBI:84167"/>
        <dbReference type="EC" id="2.1.1.201"/>
    </reaction>
</comment>
<comment type="pathway">
    <text evidence="1">Quinol/quinone metabolism; menaquinone biosynthesis; menaquinol from 1,4-dihydroxy-2-naphthoate: step 2/2.</text>
</comment>
<comment type="pathway">
    <text evidence="1">Cofactor biosynthesis; ubiquinone biosynthesis.</text>
</comment>
<comment type="similarity">
    <text evidence="1">Belongs to the class I-like SAM-binding methyltransferase superfamily. MenG/UbiE family.</text>
</comment>
<gene>
    <name evidence="1" type="primary">ubiE</name>
    <name type="ordered locus">YpsIP31758_0271</name>
</gene>
<evidence type="ECO:0000255" key="1">
    <source>
        <dbReference type="HAMAP-Rule" id="MF_01813"/>
    </source>
</evidence>
<dbReference type="EC" id="2.1.1.163" evidence="1"/>
<dbReference type="EC" id="2.1.1.201" evidence="1"/>
<dbReference type="EMBL" id="CP000720">
    <property type="protein sequence ID" value="ABS45931.1"/>
    <property type="molecule type" value="Genomic_DNA"/>
</dbReference>
<dbReference type="RefSeq" id="WP_002224024.1">
    <property type="nucleotide sequence ID" value="NC_009708.1"/>
</dbReference>
<dbReference type="SMR" id="A7FDE0"/>
<dbReference type="GeneID" id="49787763"/>
<dbReference type="KEGG" id="ypi:YpsIP31758_0271"/>
<dbReference type="HOGENOM" id="CLU_037990_0_0_6"/>
<dbReference type="UniPathway" id="UPA00079">
    <property type="reaction ID" value="UER00169"/>
</dbReference>
<dbReference type="UniPathway" id="UPA00232"/>
<dbReference type="Proteomes" id="UP000002412">
    <property type="component" value="Chromosome"/>
</dbReference>
<dbReference type="GO" id="GO:0008425">
    <property type="term" value="F:2-methoxy-6-polyprenyl-1,4-benzoquinol methyltransferase activity"/>
    <property type="evidence" value="ECO:0007669"/>
    <property type="project" value="UniProtKB-UniRule"/>
</dbReference>
<dbReference type="GO" id="GO:0043770">
    <property type="term" value="F:demethylmenaquinone methyltransferase activity"/>
    <property type="evidence" value="ECO:0007669"/>
    <property type="project" value="UniProtKB-UniRule"/>
</dbReference>
<dbReference type="GO" id="GO:0009060">
    <property type="term" value="P:aerobic respiration"/>
    <property type="evidence" value="ECO:0007669"/>
    <property type="project" value="UniProtKB-UniRule"/>
</dbReference>
<dbReference type="GO" id="GO:0009234">
    <property type="term" value="P:menaquinone biosynthetic process"/>
    <property type="evidence" value="ECO:0007669"/>
    <property type="project" value="UniProtKB-UniRule"/>
</dbReference>
<dbReference type="GO" id="GO:0032259">
    <property type="term" value="P:methylation"/>
    <property type="evidence" value="ECO:0007669"/>
    <property type="project" value="UniProtKB-KW"/>
</dbReference>
<dbReference type="CDD" id="cd02440">
    <property type="entry name" value="AdoMet_MTases"/>
    <property type="match status" value="1"/>
</dbReference>
<dbReference type="FunFam" id="3.40.50.150:FF:000014">
    <property type="entry name" value="Ubiquinone/menaquinone biosynthesis C-methyltransferase UbiE"/>
    <property type="match status" value="1"/>
</dbReference>
<dbReference type="Gene3D" id="3.40.50.150">
    <property type="entry name" value="Vaccinia Virus protein VP39"/>
    <property type="match status" value="1"/>
</dbReference>
<dbReference type="HAMAP" id="MF_01813">
    <property type="entry name" value="MenG_UbiE_methyltr"/>
    <property type="match status" value="1"/>
</dbReference>
<dbReference type="InterPro" id="IPR029063">
    <property type="entry name" value="SAM-dependent_MTases_sf"/>
</dbReference>
<dbReference type="InterPro" id="IPR004033">
    <property type="entry name" value="UbiE/COQ5_MeTrFase"/>
</dbReference>
<dbReference type="InterPro" id="IPR023576">
    <property type="entry name" value="UbiE/COQ5_MeTrFase_CS"/>
</dbReference>
<dbReference type="NCBIfam" id="TIGR01934">
    <property type="entry name" value="MenG_MenH_UbiE"/>
    <property type="match status" value="1"/>
</dbReference>
<dbReference type="NCBIfam" id="NF001240">
    <property type="entry name" value="PRK00216.1-1"/>
    <property type="match status" value="1"/>
</dbReference>
<dbReference type="NCBIfam" id="NF001242">
    <property type="entry name" value="PRK00216.1-3"/>
    <property type="match status" value="1"/>
</dbReference>
<dbReference type="NCBIfam" id="NF001244">
    <property type="entry name" value="PRK00216.1-5"/>
    <property type="match status" value="1"/>
</dbReference>
<dbReference type="PANTHER" id="PTHR43591:SF24">
    <property type="entry name" value="2-METHOXY-6-POLYPRENYL-1,4-BENZOQUINOL METHYLASE, MITOCHONDRIAL"/>
    <property type="match status" value="1"/>
</dbReference>
<dbReference type="PANTHER" id="PTHR43591">
    <property type="entry name" value="METHYLTRANSFERASE"/>
    <property type="match status" value="1"/>
</dbReference>
<dbReference type="Pfam" id="PF01209">
    <property type="entry name" value="Ubie_methyltran"/>
    <property type="match status" value="1"/>
</dbReference>
<dbReference type="SUPFAM" id="SSF53335">
    <property type="entry name" value="S-adenosyl-L-methionine-dependent methyltransferases"/>
    <property type="match status" value="1"/>
</dbReference>
<dbReference type="PROSITE" id="PS51608">
    <property type="entry name" value="SAM_MT_UBIE"/>
    <property type="match status" value="1"/>
</dbReference>
<dbReference type="PROSITE" id="PS01183">
    <property type="entry name" value="UBIE_1"/>
    <property type="match status" value="1"/>
</dbReference>
<dbReference type="PROSITE" id="PS01184">
    <property type="entry name" value="UBIE_2"/>
    <property type="match status" value="1"/>
</dbReference>
<feature type="chain" id="PRO_1000070203" description="Ubiquinone/menaquinone biosynthesis C-methyltransferase UbiE">
    <location>
        <begin position="1"/>
        <end position="251"/>
    </location>
</feature>
<feature type="binding site" evidence="1">
    <location>
        <position position="74"/>
    </location>
    <ligand>
        <name>S-adenosyl-L-methionine</name>
        <dbReference type="ChEBI" id="CHEBI:59789"/>
    </ligand>
</feature>
<feature type="binding site" evidence="1">
    <location>
        <position position="95"/>
    </location>
    <ligand>
        <name>S-adenosyl-L-methionine</name>
        <dbReference type="ChEBI" id="CHEBI:59789"/>
    </ligand>
</feature>
<feature type="binding site" evidence="1">
    <location>
        <begin position="123"/>
        <end position="124"/>
    </location>
    <ligand>
        <name>S-adenosyl-L-methionine</name>
        <dbReference type="ChEBI" id="CHEBI:59789"/>
    </ligand>
</feature>
<feature type="binding site" evidence="1">
    <location>
        <position position="140"/>
    </location>
    <ligand>
        <name>S-adenosyl-L-methionine</name>
        <dbReference type="ChEBI" id="CHEBI:59789"/>
    </ligand>
</feature>
<organism>
    <name type="scientific">Yersinia pseudotuberculosis serotype O:1b (strain IP 31758)</name>
    <dbReference type="NCBI Taxonomy" id="349747"/>
    <lineage>
        <taxon>Bacteria</taxon>
        <taxon>Pseudomonadati</taxon>
        <taxon>Pseudomonadota</taxon>
        <taxon>Gammaproteobacteria</taxon>
        <taxon>Enterobacterales</taxon>
        <taxon>Yersiniaceae</taxon>
        <taxon>Yersinia</taxon>
    </lineage>
</organism>
<proteinExistence type="inferred from homology"/>
<name>UBIE_YERP3</name>
<keyword id="KW-0474">Menaquinone biosynthesis</keyword>
<keyword id="KW-0489">Methyltransferase</keyword>
<keyword id="KW-0949">S-adenosyl-L-methionine</keyword>
<keyword id="KW-0808">Transferase</keyword>
<keyword id="KW-0831">Ubiquinone biosynthesis</keyword>
<protein>
    <recommendedName>
        <fullName evidence="1">Ubiquinone/menaquinone biosynthesis C-methyltransferase UbiE</fullName>
        <ecNumber evidence="1">2.1.1.163</ecNumber>
        <ecNumber evidence="1">2.1.1.201</ecNumber>
    </recommendedName>
    <alternativeName>
        <fullName evidence="1">2-methoxy-6-polyprenyl-1,4-benzoquinol methylase</fullName>
    </alternativeName>
    <alternativeName>
        <fullName evidence="1">Demethylmenaquinone methyltransferase</fullName>
    </alternativeName>
</protein>
<reference key="1">
    <citation type="journal article" date="2007" name="PLoS Genet.">
        <title>The complete genome sequence of Yersinia pseudotuberculosis IP31758, the causative agent of Far East scarlet-like fever.</title>
        <authorList>
            <person name="Eppinger M."/>
            <person name="Rosovitz M.J."/>
            <person name="Fricke W.F."/>
            <person name="Rasko D.A."/>
            <person name="Kokorina G."/>
            <person name="Fayolle C."/>
            <person name="Lindler L.E."/>
            <person name="Carniel E."/>
            <person name="Ravel J."/>
        </authorList>
    </citation>
    <scope>NUCLEOTIDE SEQUENCE [LARGE SCALE GENOMIC DNA]</scope>
    <source>
        <strain>IP 31758</strain>
    </source>
</reference>